<name>DNAJ_XYLFM</name>
<protein>
    <recommendedName>
        <fullName evidence="1">Chaperone protein DnaJ</fullName>
    </recommendedName>
</protein>
<sequence length="368" mass="40335">MSKRDYYQVLGVPRTASEDDLKKAYRRCAMKYHPDRNPGDAAAEAAFKECKEAYEVLADTKKRKLYDTHGHAAFEHGVGGGNAPDMNDIFGDIFGNIFGGARASRRGADVGYMVELDLEEAVAGVERQIQIPTLVECTHCNGSGSEDGHVETCGTCRGSGQVRIQRGIFAMQQTCPHCGGRGVIIRNPCKVCNGAGRVEDHKTLSVKIPAGVDNGDRIRLSGEGEQGPDGVPPGDLYVEVRVREHPIFQRDGDDLHCEVPVRISQAALGDIVRVATLDGEAEIRIPAETQSGKLFRLRGKGVRSVRSRTEGDLYCRIVVETPVNLTAEQRKLLEQFEMTFAGEDARKHSPKSATFLDGVKSFWDRMTS</sequence>
<feature type="chain" id="PRO_1000137741" description="Chaperone protein DnaJ">
    <location>
        <begin position="1"/>
        <end position="368"/>
    </location>
</feature>
<feature type="domain" description="J" evidence="1">
    <location>
        <begin position="5"/>
        <end position="70"/>
    </location>
</feature>
<feature type="repeat" description="CXXCXGXG motif">
    <location>
        <begin position="137"/>
        <end position="144"/>
    </location>
</feature>
<feature type="repeat" description="CXXCXGXG motif">
    <location>
        <begin position="153"/>
        <end position="160"/>
    </location>
</feature>
<feature type="repeat" description="CXXCXGXG motif">
    <location>
        <begin position="175"/>
        <end position="182"/>
    </location>
</feature>
<feature type="repeat" description="CXXCXGXG motif">
    <location>
        <begin position="189"/>
        <end position="196"/>
    </location>
</feature>
<feature type="zinc finger region" description="CR-type" evidence="1">
    <location>
        <begin position="124"/>
        <end position="201"/>
    </location>
</feature>
<feature type="binding site" evidence="1">
    <location>
        <position position="137"/>
    </location>
    <ligand>
        <name>Zn(2+)</name>
        <dbReference type="ChEBI" id="CHEBI:29105"/>
        <label>1</label>
    </ligand>
</feature>
<feature type="binding site" evidence="1">
    <location>
        <position position="140"/>
    </location>
    <ligand>
        <name>Zn(2+)</name>
        <dbReference type="ChEBI" id="CHEBI:29105"/>
        <label>1</label>
    </ligand>
</feature>
<feature type="binding site" evidence="1">
    <location>
        <position position="153"/>
    </location>
    <ligand>
        <name>Zn(2+)</name>
        <dbReference type="ChEBI" id="CHEBI:29105"/>
        <label>2</label>
    </ligand>
</feature>
<feature type="binding site" evidence="1">
    <location>
        <position position="156"/>
    </location>
    <ligand>
        <name>Zn(2+)</name>
        <dbReference type="ChEBI" id="CHEBI:29105"/>
        <label>2</label>
    </ligand>
</feature>
<feature type="binding site" evidence="1">
    <location>
        <position position="175"/>
    </location>
    <ligand>
        <name>Zn(2+)</name>
        <dbReference type="ChEBI" id="CHEBI:29105"/>
        <label>2</label>
    </ligand>
</feature>
<feature type="binding site" evidence="1">
    <location>
        <position position="178"/>
    </location>
    <ligand>
        <name>Zn(2+)</name>
        <dbReference type="ChEBI" id="CHEBI:29105"/>
        <label>2</label>
    </ligand>
</feature>
<feature type="binding site" evidence="1">
    <location>
        <position position="189"/>
    </location>
    <ligand>
        <name>Zn(2+)</name>
        <dbReference type="ChEBI" id="CHEBI:29105"/>
        <label>1</label>
    </ligand>
</feature>
<feature type="binding site" evidence="1">
    <location>
        <position position="192"/>
    </location>
    <ligand>
        <name>Zn(2+)</name>
        <dbReference type="ChEBI" id="CHEBI:29105"/>
        <label>1</label>
    </ligand>
</feature>
<proteinExistence type="inferred from homology"/>
<accession>B0U3J7</accession>
<reference key="1">
    <citation type="journal article" date="2010" name="J. Bacteriol.">
        <title>Whole genome sequences of two Xylella fastidiosa strains (M12 and M23) causing almond leaf scorch disease in California.</title>
        <authorList>
            <person name="Chen J."/>
            <person name="Xie G."/>
            <person name="Han S."/>
            <person name="Chertkov O."/>
            <person name="Sims D."/>
            <person name="Civerolo E.L."/>
        </authorList>
    </citation>
    <scope>NUCLEOTIDE SEQUENCE [LARGE SCALE GENOMIC DNA]</scope>
    <source>
        <strain>M12</strain>
    </source>
</reference>
<evidence type="ECO:0000255" key="1">
    <source>
        <dbReference type="HAMAP-Rule" id="MF_01152"/>
    </source>
</evidence>
<dbReference type="EMBL" id="CP000941">
    <property type="protein sequence ID" value="ACA12426.1"/>
    <property type="molecule type" value="Genomic_DNA"/>
</dbReference>
<dbReference type="RefSeq" id="WP_004085854.1">
    <property type="nucleotide sequence ID" value="NC_010513.1"/>
</dbReference>
<dbReference type="SMR" id="B0U3J7"/>
<dbReference type="KEGG" id="xfm:Xfasm12_1511"/>
<dbReference type="HOGENOM" id="CLU_017633_0_7_6"/>
<dbReference type="GO" id="GO:0005737">
    <property type="term" value="C:cytoplasm"/>
    <property type="evidence" value="ECO:0007669"/>
    <property type="project" value="UniProtKB-SubCell"/>
</dbReference>
<dbReference type="GO" id="GO:0005524">
    <property type="term" value="F:ATP binding"/>
    <property type="evidence" value="ECO:0007669"/>
    <property type="project" value="InterPro"/>
</dbReference>
<dbReference type="GO" id="GO:0031072">
    <property type="term" value="F:heat shock protein binding"/>
    <property type="evidence" value="ECO:0007669"/>
    <property type="project" value="InterPro"/>
</dbReference>
<dbReference type="GO" id="GO:0051082">
    <property type="term" value="F:unfolded protein binding"/>
    <property type="evidence" value="ECO:0007669"/>
    <property type="project" value="UniProtKB-UniRule"/>
</dbReference>
<dbReference type="GO" id="GO:0008270">
    <property type="term" value="F:zinc ion binding"/>
    <property type="evidence" value="ECO:0007669"/>
    <property type="project" value="UniProtKB-UniRule"/>
</dbReference>
<dbReference type="GO" id="GO:0051085">
    <property type="term" value="P:chaperone cofactor-dependent protein refolding"/>
    <property type="evidence" value="ECO:0007669"/>
    <property type="project" value="TreeGrafter"/>
</dbReference>
<dbReference type="GO" id="GO:0006260">
    <property type="term" value="P:DNA replication"/>
    <property type="evidence" value="ECO:0007669"/>
    <property type="project" value="UniProtKB-KW"/>
</dbReference>
<dbReference type="GO" id="GO:0042026">
    <property type="term" value="P:protein refolding"/>
    <property type="evidence" value="ECO:0007669"/>
    <property type="project" value="TreeGrafter"/>
</dbReference>
<dbReference type="GO" id="GO:0009408">
    <property type="term" value="P:response to heat"/>
    <property type="evidence" value="ECO:0007669"/>
    <property type="project" value="InterPro"/>
</dbReference>
<dbReference type="CDD" id="cd06257">
    <property type="entry name" value="DnaJ"/>
    <property type="match status" value="1"/>
</dbReference>
<dbReference type="CDD" id="cd10747">
    <property type="entry name" value="DnaJ_C"/>
    <property type="match status" value="1"/>
</dbReference>
<dbReference type="CDD" id="cd10719">
    <property type="entry name" value="DnaJ_zf"/>
    <property type="match status" value="1"/>
</dbReference>
<dbReference type="FunFam" id="2.10.230.10:FF:000002">
    <property type="entry name" value="Molecular chaperone DnaJ"/>
    <property type="match status" value="1"/>
</dbReference>
<dbReference type="FunFam" id="2.60.260.20:FF:000004">
    <property type="entry name" value="Molecular chaperone DnaJ"/>
    <property type="match status" value="1"/>
</dbReference>
<dbReference type="Gene3D" id="1.10.287.110">
    <property type="entry name" value="DnaJ domain"/>
    <property type="match status" value="1"/>
</dbReference>
<dbReference type="Gene3D" id="2.10.230.10">
    <property type="entry name" value="Heat shock protein DnaJ, cysteine-rich domain"/>
    <property type="match status" value="1"/>
</dbReference>
<dbReference type="Gene3D" id="2.60.260.20">
    <property type="entry name" value="Urease metallochaperone UreE, N-terminal domain"/>
    <property type="match status" value="2"/>
</dbReference>
<dbReference type="HAMAP" id="MF_01152">
    <property type="entry name" value="DnaJ"/>
    <property type="match status" value="1"/>
</dbReference>
<dbReference type="InterPro" id="IPR012724">
    <property type="entry name" value="DnaJ"/>
</dbReference>
<dbReference type="InterPro" id="IPR002939">
    <property type="entry name" value="DnaJ_C"/>
</dbReference>
<dbReference type="InterPro" id="IPR001623">
    <property type="entry name" value="DnaJ_domain"/>
</dbReference>
<dbReference type="InterPro" id="IPR008971">
    <property type="entry name" value="HSP40/DnaJ_pept-bd"/>
</dbReference>
<dbReference type="InterPro" id="IPR001305">
    <property type="entry name" value="HSP_DnaJ_Cys-rich_dom"/>
</dbReference>
<dbReference type="InterPro" id="IPR036410">
    <property type="entry name" value="HSP_DnaJ_Cys-rich_dom_sf"/>
</dbReference>
<dbReference type="InterPro" id="IPR036869">
    <property type="entry name" value="J_dom_sf"/>
</dbReference>
<dbReference type="NCBIfam" id="TIGR02349">
    <property type="entry name" value="DnaJ_bact"/>
    <property type="match status" value="1"/>
</dbReference>
<dbReference type="NCBIfam" id="NF008035">
    <property type="entry name" value="PRK10767.1"/>
    <property type="match status" value="1"/>
</dbReference>
<dbReference type="PANTHER" id="PTHR43096:SF48">
    <property type="entry name" value="CHAPERONE PROTEIN DNAJ"/>
    <property type="match status" value="1"/>
</dbReference>
<dbReference type="PANTHER" id="PTHR43096">
    <property type="entry name" value="DNAJ HOMOLOG 1, MITOCHONDRIAL-RELATED"/>
    <property type="match status" value="1"/>
</dbReference>
<dbReference type="Pfam" id="PF00226">
    <property type="entry name" value="DnaJ"/>
    <property type="match status" value="1"/>
</dbReference>
<dbReference type="Pfam" id="PF01556">
    <property type="entry name" value="DnaJ_C"/>
    <property type="match status" value="1"/>
</dbReference>
<dbReference type="Pfam" id="PF00684">
    <property type="entry name" value="DnaJ_CXXCXGXG"/>
    <property type="match status" value="1"/>
</dbReference>
<dbReference type="PRINTS" id="PR00625">
    <property type="entry name" value="JDOMAIN"/>
</dbReference>
<dbReference type="SMART" id="SM00271">
    <property type="entry name" value="DnaJ"/>
    <property type="match status" value="1"/>
</dbReference>
<dbReference type="SUPFAM" id="SSF46565">
    <property type="entry name" value="Chaperone J-domain"/>
    <property type="match status" value="1"/>
</dbReference>
<dbReference type="SUPFAM" id="SSF57938">
    <property type="entry name" value="DnaJ/Hsp40 cysteine-rich domain"/>
    <property type="match status" value="1"/>
</dbReference>
<dbReference type="SUPFAM" id="SSF49493">
    <property type="entry name" value="HSP40/DnaJ peptide-binding domain"/>
    <property type="match status" value="2"/>
</dbReference>
<dbReference type="PROSITE" id="PS50076">
    <property type="entry name" value="DNAJ_2"/>
    <property type="match status" value="1"/>
</dbReference>
<dbReference type="PROSITE" id="PS51188">
    <property type="entry name" value="ZF_CR"/>
    <property type="match status" value="1"/>
</dbReference>
<comment type="function">
    <text evidence="1">Participates actively in the response to hyperosmotic and heat shock by preventing the aggregation of stress-denatured proteins and by disaggregating proteins, also in an autonomous, DnaK-independent fashion. Unfolded proteins bind initially to DnaJ; upon interaction with the DnaJ-bound protein, DnaK hydrolyzes its bound ATP, resulting in the formation of a stable complex. GrpE releases ADP from DnaK; ATP binding to DnaK triggers the release of the substrate protein, thus completing the reaction cycle. Several rounds of ATP-dependent interactions between DnaJ, DnaK and GrpE are required for fully efficient folding. Also involved, together with DnaK and GrpE, in the DNA replication of plasmids through activation of initiation proteins.</text>
</comment>
<comment type="cofactor">
    <cofactor evidence="1">
        <name>Zn(2+)</name>
        <dbReference type="ChEBI" id="CHEBI:29105"/>
    </cofactor>
    <text evidence="1">Binds 2 Zn(2+) ions per monomer.</text>
</comment>
<comment type="subunit">
    <text evidence="1">Homodimer.</text>
</comment>
<comment type="subcellular location">
    <subcellularLocation>
        <location evidence="1">Cytoplasm</location>
    </subcellularLocation>
</comment>
<comment type="domain">
    <text evidence="1">The J domain is necessary and sufficient to stimulate DnaK ATPase activity. Zinc center 1 plays an important role in the autonomous, DnaK-independent chaperone activity of DnaJ. Zinc center 2 is essential for interaction with DnaK and for DnaJ activity.</text>
</comment>
<comment type="similarity">
    <text evidence="1">Belongs to the DnaJ family.</text>
</comment>
<organism>
    <name type="scientific">Xylella fastidiosa (strain M12)</name>
    <dbReference type="NCBI Taxonomy" id="405440"/>
    <lineage>
        <taxon>Bacteria</taxon>
        <taxon>Pseudomonadati</taxon>
        <taxon>Pseudomonadota</taxon>
        <taxon>Gammaproteobacteria</taxon>
        <taxon>Lysobacterales</taxon>
        <taxon>Lysobacteraceae</taxon>
        <taxon>Xylella</taxon>
    </lineage>
</organism>
<keyword id="KW-0143">Chaperone</keyword>
<keyword id="KW-0963">Cytoplasm</keyword>
<keyword id="KW-0235">DNA replication</keyword>
<keyword id="KW-0479">Metal-binding</keyword>
<keyword id="KW-0677">Repeat</keyword>
<keyword id="KW-0346">Stress response</keyword>
<keyword id="KW-0862">Zinc</keyword>
<keyword id="KW-0863">Zinc-finger</keyword>
<gene>
    <name evidence="1" type="primary">dnaJ</name>
    <name type="ordered locus">Xfasm12_1511</name>
</gene>